<dbReference type="EC" id="2.7.7.56" evidence="1"/>
<dbReference type="EMBL" id="AE017223">
    <property type="protein sequence ID" value="AAX73581.1"/>
    <property type="molecule type" value="Genomic_DNA"/>
</dbReference>
<dbReference type="RefSeq" id="WP_002965421.1">
    <property type="nucleotide sequence ID" value="NC_006932.1"/>
</dbReference>
<dbReference type="SMR" id="Q57FK3"/>
<dbReference type="EnsemblBacteria" id="AAX73581">
    <property type="protein sequence ID" value="AAX73581"/>
    <property type="gene ID" value="BruAb1_0169"/>
</dbReference>
<dbReference type="GeneID" id="97534418"/>
<dbReference type="KEGG" id="bmb:BruAb1_0169"/>
<dbReference type="HOGENOM" id="CLU_050858_0_0_5"/>
<dbReference type="Proteomes" id="UP000000540">
    <property type="component" value="Chromosome I"/>
</dbReference>
<dbReference type="GO" id="GO:0000175">
    <property type="term" value="F:3'-5'-RNA exonuclease activity"/>
    <property type="evidence" value="ECO:0007669"/>
    <property type="project" value="UniProtKB-UniRule"/>
</dbReference>
<dbReference type="GO" id="GO:0000049">
    <property type="term" value="F:tRNA binding"/>
    <property type="evidence" value="ECO:0007669"/>
    <property type="project" value="UniProtKB-UniRule"/>
</dbReference>
<dbReference type="GO" id="GO:0009022">
    <property type="term" value="F:tRNA nucleotidyltransferase activity"/>
    <property type="evidence" value="ECO:0007669"/>
    <property type="project" value="UniProtKB-UniRule"/>
</dbReference>
<dbReference type="GO" id="GO:0016075">
    <property type="term" value="P:rRNA catabolic process"/>
    <property type="evidence" value="ECO:0007669"/>
    <property type="project" value="UniProtKB-UniRule"/>
</dbReference>
<dbReference type="GO" id="GO:0006364">
    <property type="term" value="P:rRNA processing"/>
    <property type="evidence" value="ECO:0007669"/>
    <property type="project" value="UniProtKB-KW"/>
</dbReference>
<dbReference type="GO" id="GO:0008033">
    <property type="term" value="P:tRNA processing"/>
    <property type="evidence" value="ECO:0007669"/>
    <property type="project" value="UniProtKB-UniRule"/>
</dbReference>
<dbReference type="CDD" id="cd11362">
    <property type="entry name" value="RNase_PH_bact"/>
    <property type="match status" value="1"/>
</dbReference>
<dbReference type="FunFam" id="3.30.230.70:FF:000003">
    <property type="entry name" value="Ribonuclease PH"/>
    <property type="match status" value="1"/>
</dbReference>
<dbReference type="Gene3D" id="3.30.230.70">
    <property type="entry name" value="GHMP Kinase, N-terminal domain"/>
    <property type="match status" value="1"/>
</dbReference>
<dbReference type="HAMAP" id="MF_00564">
    <property type="entry name" value="RNase_PH"/>
    <property type="match status" value="1"/>
</dbReference>
<dbReference type="InterPro" id="IPR001247">
    <property type="entry name" value="ExoRNase_PH_dom1"/>
</dbReference>
<dbReference type="InterPro" id="IPR015847">
    <property type="entry name" value="ExoRNase_PH_dom2"/>
</dbReference>
<dbReference type="InterPro" id="IPR036345">
    <property type="entry name" value="ExoRNase_PH_dom2_sf"/>
</dbReference>
<dbReference type="InterPro" id="IPR027408">
    <property type="entry name" value="PNPase/RNase_PH_dom_sf"/>
</dbReference>
<dbReference type="InterPro" id="IPR020568">
    <property type="entry name" value="Ribosomal_Su5_D2-typ_SF"/>
</dbReference>
<dbReference type="InterPro" id="IPR050080">
    <property type="entry name" value="RNase_PH"/>
</dbReference>
<dbReference type="InterPro" id="IPR002381">
    <property type="entry name" value="RNase_PH_bac-type"/>
</dbReference>
<dbReference type="InterPro" id="IPR018336">
    <property type="entry name" value="RNase_PH_CS"/>
</dbReference>
<dbReference type="NCBIfam" id="TIGR01966">
    <property type="entry name" value="RNasePH"/>
    <property type="match status" value="1"/>
</dbReference>
<dbReference type="PANTHER" id="PTHR11953">
    <property type="entry name" value="EXOSOME COMPLEX COMPONENT"/>
    <property type="match status" value="1"/>
</dbReference>
<dbReference type="PANTHER" id="PTHR11953:SF0">
    <property type="entry name" value="EXOSOME COMPLEX COMPONENT RRP41"/>
    <property type="match status" value="1"/>
</dbReference>
<dbReference type="Pfam" id="PF01138">
    <property type="entry name" value="RNase_PH"/>
    <property type="match status" value="1"/>
</dbReference>
<dbReference type="Pfam" id="PF03725">
    <property type="entry name" value="RNase_PH_C"/>
    <property type="match status" value="1"/>
</dbReference>
<dbReference type="SUPFAM" id="SSF55666">
    <property type="entry name" value="Ribonuclease PH domain 2-like"/>
    <property type="match status" value="1"/>
</dbReference>
<dbReference type="SUPFAM" id="SSF54211">
    <property type="entry name" value="Ribosomal protein S5 domain 2-like"/>
    <property type="match status" value="1"/>
</dbReference>
<dbReference type="PROSITE" id="PS01277">
    <property type="entry name" value="RIBONUCLEASE_PH"/>
    <property type="match status" value="1"/>
</dbReference>
<keyword id="KW-0548">Nucleotidyltransferase</keyword>
<keyword id="KW-0694">RNA-binding</keyword>
<keyword id="KW-0698">rRNA processing</keyword>
<keyword id="KW-0808">Transferase</keyword>
<keyword id="KW-0819">tRNA processing</keyword>
<keyword id="KW-0820">tRNA-binding</keyword>
<gene>
    <name evidence="1" type="primary">rph</name>
    <name type="ordered locus">BruAb1_0169</name>
</gene>
<reference key="1">
    <citation type="journal article" date="2005" name="J. Bacteriol.">
        <title>Completion of the genome sequence of Brucella abortus and comparison to the highly similar genomes of Brucella melitensis and Brucella suis.</title>
        <authorList>
            <person name="Halling S.M."/>
            <person name="Peterson-Burch B.D."/>
            <person name="Bricker B.J."/>
            <person name="Zuerner R.L."/>
            <person name="Qing Z."/>
            <person name="Li L.-L."/>
            <person name="Kapur V."/>
            <person name="Alt D.P."/>
            <person name="Olsen S.C."/>
        </authorList>
    </citation>
    <scope>NUCLEOTIDE SEQUENCE [LARGE SCALE GENOMIC DNA]</scope>
    <source>
        <strain>9-941</strain>
    </source>
</reference>
<proteinExistence type="inferred from homology"/>
<name>RNPH_BRUAB</name>
<organism>
    <name type="scientific">Brucella abortus biovar 1 (strain 9-941)</name>
    <dbReference type="NCBI Taxonomy" id="262698"/>
    <lineage>
        <taxon>Bacteria</taxon>
        <taxon>Pseudomonadati</taxon>
        <taxon>Pseudomonadota</taxon>
        <taxon>Alphaproteobacteria</taxon>
        <taxon>Hyphomicrobiales</taxon>
        <taxon>Brucellaceae</taxon>
        <taxon>Brucella/Ochrobactrum group</taxon>
        <taxon>Brucella</taxon>
    </lineage>
</organism>
<feature type="chain" id="PRO_1000024781" description="Ribonuclease PH">
    <location>
        <begin position="1"/>
        <end position="238"/>
    </location>
</feature>
<feature type="binding site" evidence="1">
    <location>
        <position position="86"/>
    </location>
    <ligand>
        <name>phosphate</name>
        <dbReference type="ChEBI" id="CHEBI:43474"/>
        <note>substrate</note>
    </ligand>
</feature>
<feature type="binding site" evidence="1">
    <location>
        <begin position="124"/>
        <end position="126"/>
    </location>
    <ligand>
        <name>phosphate</name>
        <dbReference type="ChEBI" id="CHEBI:43474"/>
        <note>substrate</note>
    </ligand>
</feature>
<comment type="function">
    <text evidence="1">Phosphorolytic 3'-5' exoribonuclease that plays an important role in tRNA 3'-end maturation. Removes nucleotide residues following the 3'-CCA terminus of tRNAs; can also add nucleotides to the ends of RNA molecules by using nucleoside diphosphates as substrates, but this may not be physiologically important. Probably plays a role in initiation of 16S rRNA degradation (leading to ribosome degradation) during starvation.</text>
</comment>
<comment type="catalytic activity">
    <reaction evidence="1">
        <text>tRNA(n+1) + phosphate = tRNA(n) + a ribonucleoside 5'-diphosphate</text>
        <dbReference type="Rhea" id="RHEA:10628"/>
        <dbReference type="Rhea" id="RHEA-COMP:17343"/>
        <dbReference type="Rhea" id="RHEA-COMP:17344"/>
        <dbReference type="ChEBI" id="CHEBI:43474"/>
        <dbReference type="ChEBI" id="CHEBI:57930"/>
        <dbReference type="ChEBI" id="CHEBI:173114"/>
        <dbReference type="EC" id="2.7.7.56"/>
    </reaction>
</comment>
<comment type="subunit">
    <text evidence="1">Homohexameric ring arranged as a trimer of dimers.</text>
</comment>
<comment type="similarity">
    <text evidence="1">Belongs to the RNase PH family.</text>
</comment>
<evidence type="ECO:0000255" key="1">
    <source>
        <dbReference type="HAMAP-Rule" id="MF_00564"/>
    </source>
</evidence>
<protein>
    <recommendedName>
        <fullName evidence="1">Ribonuclease PH</fullName>
        <shortName evidence="1">RNase PH</shortName>
        <ecNumber evidence="1">2.7.7.56</ecNumber>
    </recommendedName>
    <alternativeName>
        <fullName evidence="1">tRNA nucleotidyltransferase</fullName>
    </alternativeName>
</protein>
<accession>Q57FK3</accession>
<sequence length="238" mass="25907">MRPSKRAADEMRAISFERGVSKHAEGSCLVKFGDTHVLCTASLEEKVPGWMRNTGKGWVTAEYGMLPRSTGERMRREAAAGKQGGRTQEIQRLIGRSLRAVVDMQALGEMQITVDCDVIQADGGTRTAAITGGWVALHECLRWMEARQMVRVEKVLKDHVAAISCGIYEGVPVLDLDYAEDSVAETDSNFVMTGKGGIVEIQGTAEGVPFSEEEFGALMKLARSGIDRLVSLQKMAVA</sequence>